<accession>A1UTZ3</accession>
<name>GPDA_BARBK</name>
<gene>
    <name evidence="1" type="primary">gpsA</name>
    <name type="ordered locus">BARBAKC583_1191</name>
</gene>
<feature type="chain" id="PRO_1000049483" description="Glycerol-3-phosphate dehydrogenase [NAD(P)+]">
    <location>
        <begin position="1"/>
        <end position="311"/>
    </location>
</feature>
<feature type="active site" description="Proton acceptor" evidence="1">
    <location>
        <position position="177"/>
    </location>
</feature>
<feature type="binding site" evidence="1">
    <location>
        <position position="11"/>
    </location>
    <ligand>
        <name>NADPH</name>
        <dbReference type="ChEBI" id="CHEBI:57783"/>
    </ligand>
</feature>
<feature type="binding site" evidence="1">
    <location>
        <position position="30"/>
    </location>
    <ligand>
        <name>NADPH</name>
        <dbReference type="ChEBI" id="CHEBI:57783"/>
    </ligand>
</feature>
<feature type="binding site" evidence="1">
    <location>
        <position position="31"/>
    </location>
    <ligand>
        <name>NADPH</name>
        <dbReference type="ChEBI" id="CHEBI:57783"/>
    </ligand>
</feature>
<feature type="binding site" evidence="1">
    <location>
        <position position="95"/>
    </location>
    <ligand>
        <name>NADPH</name>
        <dbReference type="ChEBI" id="CHEBI:57783"/>
    </ligand>
</feature>
<feature type="binding site" evidence="1">
    <location>
        <position position="95"/>
    </location>
    <ligand>
        <name>sn-glycerol 3-phosphate</name>
        <dbReference type="ChEBI" id="CHEBI:57597"/>
    </ligand>
</feature>
<feature type="binding site" evidence="1">
    <location>
        <position position="123"/>
    </location>
    <ligand>
        <name>sn-glycerol 3-phosphate</name>
        <dbReference type="ChEBI" id="CHEBI:57597"/>
    </ligand>
</feature>
<feature type="binding site" evidence="1">
    <location>
        <position position="125"/>
    </location>
    <ligand>
        <name>sn-glycerol 3-phosphate</name>
        <dbReference type="ChEBI" id="CHEBI:57597"/>
    </ligand>
</feature>
<feature type="binding site" evidence="1">
    <location>
        <position position="127"/>
    </location>
    <ligand>
        <name>NADPH</name>
        <dbReference type="ChEBI" id="CHEBI:57783"/>
    </ligand>
</feature>
<feature type="binding site" evidence="1">
    <location>
        <position position="177"/>
    </location>
    <ligand>
        <name>sn-glycerol 3-phosphate</name>
        <dbReference type="ChEBI" id="CHEBI:57597"/>
    </ligand>
</feature>
<feature type="binding site" evidence="1">
    <location>
        <position position="230"/>
    </location>
    <ligand>
        <name>sn-glycerol 3-phosphate</name>
        <dbReference type="ChEBI" id="CHEBI:57597"/>
    </ligand>
</feature>
<feature type="binding site" evidence="1">
    <location>
        <position position="240"/>
    </location>
    <ligand>
        <name>sn-glycerol 3-phosphate</name>
        <dbReference type="ChEBI" id="CHEBI:57597"/>
    </ligand>
</feature>
<feature type="binding site" evidence="1">
    <location>
        <position position="241"/>
    </location>
    <ligand>
        <name>NADPH</name>
        <dbReference type="ChEBI" id="CHEBI:57783"/>
    </ligand>
</feature>
<feature type="binding site" evidence="1">
    <location>
        <position position="241"/>
    </location>
    <ligand>
        <name>sn-glycerol 3-phosphate</name>
        <dbReference type="ChEBI" id="CHEBI:57597"/>
    </ligand>
</feature>
<feature type="binding site" evidence="1">
    <location>
        <position position="242"/>
    </location>
    <ligand>
        <name>sn-glycerol 3-phosphate</name>
        <dbReference type="ChEBI" id="CHEBI:57597"/>
    </ligand>
</feature>
<feature type="binding site" evidence="1">
    <location>
        <position position="265"/>
    </location>
    <ligand>
        <name>NADPH</name>
        <dbReference type="ChEBI" id="CHEBI:57783"/>
    </ligand>
</feature>
<feature type="binding site" evidence="1">
    <location>
        <position position="267"/>
    </location>
    <ligand>
        <name>NADPH</name>
        <dbReference type="ChEBI" id="CHEBI:57783"/>
    </ligand>
</feature>
<dbReference type="EC" id="1.1.1.94" evidence="1"/>
<dbReference type="EMBL" id="CP000524">
    <property type="protein sequence ID" value="ABM45673.1"/>
    <property type="molecule type" value="Genomic_DNA"/>
</dbReference>
<dbReference type="RefSeq" id="WP_005767865.1">
    <property type="nucleotide sequence ID" value="NC_008783.1"/>
</dbReference>
<dbReference type="SMR" id="A1UTZ3"/>
<dbReference type="STRING" id="360095.BARBAKC583_1191"/>
<dbReference type="GeneID" id="4684265"/>
<dbReference type="KEGG" id="bbk:BARBAKC583_1191"/>
<dbReference type="PATRIC" id="fig|360095.6.peg.1157"/>
<dbReference type="eggNOG" id="COG0240">
    <property type="taxonomic scope" value="Bacteria"/>
</dbReference>
<dbReference type="HOGENOM" id="CLU_033449_0_2_5"/>
<dbReference type="OrthoDB" id="9812273at2"/>
<dbReference type="UniPathway" id="UPA00940"/>
<dbReference type="Proteomes" id="UP000000643">
    <property type="component" value="Chromosome"/>
</dbReference>
<dbReference type="GO" id="GO:0005829">
    <property type="term" value="C:cytosol"/>
    <property type="evidence" value="ECO:0007669"/>
    <property type="project" value="TreeGrafter"/>
</dbReference>
<dbReference type="GO" id="GO:0047952">
    <property type="term" value="F:glycerol-3-phosphate dehydrogenase [NAD(P)+] activity"/>
    <property type="evidence" value="ECO:0007669"/>
    <property type="project" value="UniProtKB-UniRule"/>
</dbReference>
<dbReference type="GO" id="GO:0051287">
    <property type="term" value="F:NAD binding"/>
    <property type="evidence" value="ECO:0007669"/>
    <property type="project" value="InterPro"/>
</dbReference>
<dbReference type="GO" id="GO:0005975">
    <property type="term" value="P:carbohydrate metabolic process"/>
    <property type="evidence" value="ECO:0007669"/>
    <property type="project" value="InterPro"/>
</dbReference>
<dbReference type="GO" id="GO:0046167">
    <property type="term" value="P:glycerol-3-phosphate biosynthetic process"/>
    <property type="evidence" value="ECO:0007669"/>
    <property type="project" value="UniProtKB-UniRule"/>
</dbReference>
<dbReference type="GO" id="GO:0046168">
    <property type="term" value="P:glycerol-3-phosphate catabolic process"/>
    <property type="evidence" value="ECO:0007669"/>
    <property type="project" value="InterPro"/>
</dbReference>
<dbReference type="GO" id="GO:0006650">
    <property type="term" value="P:glycerophospholipid metabolic process"/>
    <property type="evidence" value="ECO:0007669"/>
    <property type="project" value="UniProtKB-UniRule"/>
</dbReference>
<dbReference type="GO" id="GO:0008654">
    <property type="term" value="P:phospholipid biosynthetic process"/>
    <property type="evidence" value="ECO:0007669"/>
    <property type="project" value="UniProtKB-KW"/>
</dbReference>
<dbReference type="FunFam" id="1.10.1040.10:FF:000025">
    <property type="entry name" value="Glycerol-3-phosphate dehydrogenase [NAD(P)+]"/>
    <property type="match status" value="1"/>
</dbReference>
<dbReference type="Gene3D" id="1.10.1040.10">
    <property type="entry name" value="N-(1-d-carboxylethyl)-l-norvaline Dehydrogenase, domain 2"/>
    <property type="match status" value="1"/>
</dbReference>
<dbReference type="Gene3D" id="3.40.50.720">
    <property type="entry name" value="NAD(P)-binding Rossmann-like Domain"/>
    <property type="match status" value="1"/>
</dbReference>
<dbReference type="HAMAP" id="MF_00394">
    <property type="entry name" value="NAD_Glyc3P_dehydrog"/>
    <property type="match status" value="1"/>
</dbReference>
<dbReference type="InterPro" id="IPR008927">
    <property type="entry name" value="6-PGluconate_DH-like_C_sf"/>
</dbReference>
<dbReference type="InterPro" id="IPR013328">
    <property type="entry name" value="6PGD_dom2"/>
</dbReference>
<dbReference type="InterPro" id="IPR006168">
    <property type="entry name" value="G3P_DH_NAD-dep"/>
</dbReference>
<dbReference type="InterPro" id="IPR006109">
    <property type="entry name" value="G3P_DH_NAD-dep_C"/>
</dbReference>
<dbReference type="InterPro" id="IPR011128">
    <property type="entry name" value="G3P_DH_NAD-dep_N"/>
</dbReference>
<dbReference type="InterPro" id="IPR036291">
    <property type="entry name" value="NAD(P)-bd_dom_sf"/>
</dbReference>
<dbReference type="NCBIfam" id="NF000940">
    <property type="entry name" value="PRK00094.1-2"/>
    <property type="match status" value="1"/>
</dbReference>
<dbReference type="NCBIfam" id="NF000942">
    <property type="entry name" value="PRK00094.1-4"/>
    <property type="match status" value="1"/>
</dbReference>
<dbReference type="NCBIfam" id="NF000943">
    <property type="entry name" value="PRK00094.2-1"/>
    <property type="match status" value="1"/>
</dbReference>
<dbReference type="PANTHER" id="PTHR11728">
    <property type="entry name" value="GLYCEROL-3-PHOSPHATE DEHYDROGENASE"/>
    <property type="match status" value="1"/>
</dbReference>
<dbReference type="PANTHER" id="PTHR11728:SF1">
    <property type="entry name" value="GLYCEROL-3-PHOSPHATE DEHYDROGENASE [NAD(+)] 2, CHLOROPLASTIC"/>
    <property type="match status" value="1"/>
</dbReference>
<dbReference type="Pfam" id="PF07479">
    <property type="entry name" value="NAD_Gly3P_dh_C"/>
    <property type="match status" value="1"/>
</dbReference>
<dbReference type="Pfam" id="PF01210">
    <property type="entry name" value="NAD_Gly3P_dh_N"/>
    <property type="match status" value="1"/>
</dbReference>
<dbReference type="PIRSF" id="PIRSF000114">
    <property type="entry name" value="Glycerol-3-P_dh"/>
    <property type="match status" value="1"/>
</dbReference>
<dbReference type="PRINTS" id="PR00077">
    <property type="entry name" value="GPDHDRGNASE"/>
</dbReference>
<dbReference type="SUPFAM" id="SSF48179">
    <property type="entry name" value="6-phosphogluconate dehydrogenase C-terminal domain-like"/>
    <property type="match status" value="1"/>
</dbReference>
<dbReference type="SUPFAM" id="SSF51735">
    <property type="entry name" value="NAD(P)-binding Rossmann-fold domains"/>
    <property type="match status" value="1"/>
</dbReference>
<dbReference type="PROSITE" id="PS00957">
    <property type="entry name" value="NAD_G3PDH"/>
    <property type="match status" value="1"/>
</dbReference>
<comment type="function">
    <text evidence="1">Catalyzes the reduction of the glycolytic intermediate dihydroxyacetone phosphate (DHAP) to sn-glycerol 3-phosphate (G3P), the key precursor for phospholipid synthesis.</text>
</comment>
<comment type="catalytic activity">
    <reaction evidence="1">
        <text>sn-glycerol 3-phosphate + NAD(+) = dihydroxyacetone phosphate + NADH + H(+)</text>
        <dbReference type="Rhea" id="RHEA:11092"/>
        <dbReference type="ChEBI" id="CHEBI:15378"/>
        <dbReference type="ChEBI" id="CHEBI:57540"/>
        <dbReference type="ChEBI" id="CHEBI:57597"/>
        <dbReference type="ChEBI" id="CHEBI:57642"/>
        <dbReference type="ChEBI" id="CHEBI:57945"/>
        <dbReference type="EC" id="1.1.1.94"/>
    </reaction>
    <physiologicalReaction direction="right-to-left" evidence="1">
        <dbReference type="Rhea" id="RHEA:11094"/>
    </physiologicalReaction>
</comment>
<comment type="catalytic activity">
    <reaction evidence="1">
        <text>sn-glycerol 3-phosphate + NADP(+) = dihydroxyacetone phosphate + NADPH + H(+)</text>
        <dbReference type="Rhea" id="RHEA:11096"/>
        <dbReference type="ChEBI" id="CHEBI:15378"/>
        <dbReference type="ChEBI" id="CHEBI:57597"/>
        <dbReference type="ChEBI" id="CHEBI:57642"/>
        <dbReference type="ChEBI" id="CHEBI:57783"/>
        <dbReference type="ChEBI" id="CHEBI:58349"/>
        <dbReference type="EC" id="1.1.1.94"/>
    </reaction>
    <physiologicalReaction direction="right-to-left" evidence="1">
        <dbReference type="Rhea" id="RHEA:11098"/>
    </physiologicalReaction>
</comment>
<comment type="pathway">
    <text evidence="1">Membrane lipid metabolism; glycerophospholipid metabolism.</text>
</comment>
<comment type="subcellular location">
    <subcellularLocation>
        <location evidence="1">Cytoplasm</location>
    </subcellularLocation>
</comment>
<comment type="similarity">
    <text evidence="1">Belongs to the NAD-dependent glycerol-3-phosphate dehydrogenase family.</text>
</comment>
<organism>
    <name type="scientific">Bartonella bacilliformis (strain ATCC 35685 / KC583 / Herrer 020/F12,63)</name>
    <dbReference type="NCBI Taxonomy" id="360095"/>
    <lineage>
        <taxon>Bacteria</taxon>
        <taxon>Pseudomonadati</taxon>
        <taxon>Pseudomonadota</taxon>
        <taxon>Alphaproteobacteria</taxon>
        <taxon>Hyphomicrobiales</taxon>
        <taxon>Bartonellaceae</taxon>
        <taxon>Bartonella</taxon>
    </lineage>
</organism>
<sequence length="311" mass="33844">MKITIFGGGAWGQALAFAFAQKNEVQIVSRRNISTALMPLNEILNKNSHRIILQSSLEESLNSELFVIAISVQALREWFIRARLNQNSKILIASKGIEEKTGIFVSQIAKKFISLENLCFLAGPSFAKEIILGLPCALAIHSCNPILAQKFANQMPSFIKPYIEDDIIGGEVASAYKNVIAIAGGICDGLNLGQNAKASLLSRGLVEMCKFGEYFGAKMQTFLGLSGAGDLFLTANSLLSRNYRVGLGLAQNNRLEDILRDLGEVAEGIKTSQAITQISEKEGIYTPIATEIQKIIQGKSPLESMSTLMKK</sequence>
<keyword id="KW-0963">Cytoplasm</keyword>
<keyword id="KW-0444">Lipid biosynthesis</keyword>
<keyword id="KW-0443">Lipid metabolism</keyword>
<keyword id="KW-0520">NAD</keyword>
<keyword id="KW-0521">NADP</keyword>
<keyword id="KW-0547">Nucleotide-binding</keyword>
<keyword id="KW-0560">Oxidoreductase</keyword>
<keyword id="KW-0594">Phospholipid biosynthesis</keyword>
<keyword id="KW-1208">Phospholipid metabolism</keyword>
<proteinExistence type="inferred from homology"/>
<reference key="1">
    <citation type="submission" date="2006-12" db="EMBL/GenBank/DDBJ databases">
        <authorList>
            <person name="Hendrix L."/>
            <person name="Mohamoud Y."/>
            <person name="Radune D."/>
            <person name="Shvartsbeyn A."/>
            <person name="Daugherty S."/>
            <person name="Dodson R."/>
            <person name="Durkin A.S."/>
            <person name="Harkins D."/>
            <person name="Huot H."/>
            <person name="Kothari S.P."/>
            <person name="Madupu R."/>
            <person name="Li J."/>
            <person name="Nelson W.C."/>
            <person name="Shrivastava S."/>
            <person name="Giglio M.G."/>
            <person name="Haft D."/>
            <person name="Selengut J."/>
            <person name="Fraser-Ligget C."/>
            <person name="Seshadri R."/>
        </authorList>
    </citation>
    <scope>NUCLEOTIDE SEQUENCE [LARGE SCALE GENOMIC DNA]</scope>
    <source>
        <strain>ATCC 35685 / KC583 / Herrer 020/F12,63</strain>
    </source>
</reference>
<protein>
    <recommendedName>
        <fullName evidence="1">Glycerol-3-phosphate dehydrogenase [NAD(P)+]</fullName>
        <ecNumber evidence="1">1.1.1.94</ecNumber>
    </recommendedName>
    <alternativeName>
        <fullName evidence="1">NAD(P)(+)-dependent glycerol-3-phosphate dehydrogenase</fullName>
    </alternativeName>
    <alternativeName>
        <fullName evidence="1">NAD(P)H-dependent dihydroxyacetone-phosphate reductase</fullName>
    </alternativeName>
</protein>
<evidence type="ECO:0000255" key="1">
    <source>
        <dbReference type="HAMAP-Rule" id="MF_00394"/>
    </source>
</evidence>